<protein>
    <recommendedName>
        <fullName evidence="1">Large ribosomal subunit protein bL35</fullName>
    </recommendedName>
    <alternativeName>
        <fullName evidence="3">50S ribosomal protein L35</fullName>
    </alternativeName>
</protein>
<feature type="chain" id="PRO_1000146162" description="Large ribosomal subunit protein bL35">
    <location>
        <begin position="1"/>
        <end position="66"/>
    </location>
</feature>
<feature type="region of interest" description="Disordered" evidence="2">
    <location>
        <begin position="1"/>
        <end position="20"/>
    </location>
</feature>
<feature type="compositionally biased region" description="Basic residues" evidence="2">
    <location>
        <begin position="1"/>
        <end position="16"/>
    </location>
</feature>
<keyword id="KW-1185">Reference proteome</keyword>
<keyword id="KW-0687">Ribonucleoprotein</keyword>
<keyword id="KW-0689">Ribosomal protein</keyword>
<organism>
    <name type="scientific">Streptococcus uberis (strain ATCC BAA-854 / 0140J)</name>
    <dbReference type="NCBI Taxonomy" id="218495"/>
    <lineage>
        <taxon>Bacteria</taxon>
        <taxon>Bacillati</taxon>
        <taxon>Bacillota</taxon>
        <taxon>Bacilli</taxon>
        <taxon>Lactobacillales</taxon>
        <taxon>Streptococcaceae</taxon>
        <taxon>Streptococcus</taxon>
    </lineage>
</organism>
<reference key="1">
    <citation type="journal article" date="2009" name="BMC Genomics">
        <title>Evidence for niche adaptation in the genome of the bovine pathogen Streptococcus uberis.</title>
        <authorList>
            <person name="Ward P.N."/>
            <person name="Holden M.T.G."/>
            <person name="Leigh J.A."/>
            <person name="Lennard N."/>
            <person name="Bignell A."/>
            <person name="Barron A."/>
            <person name="Clark L."/>
            <person name="Quail M.A."/>
            <person name="Woodward J."/>
            <person name="Barrell B.G."/>
            <person name="Egan S.A."/>
            <person name="Field T.R."/>
            <person name="Maskell D."/>
            <person name="Kehoe M."/>
            <person name="Dowson C.G."/>
            <person name="Chanter N."/>
            <person name="Whatmore A.M."/>
            <person name="Bentley S.D."/>
            <person name="Parkhill J."/>
        </authorList>
    </citation>
    <scope>NUCLEOTIDE SEQUENCE [LARGE SCALE GENOMIC DNA]</scope>
    <source>
        <strain>ATCC BAA-854 / 0140J</strain>
    </source>
</reference>
<name>RL35_STRU0</name>
<comment type="similarity">
    <text evidence="1">Belongs to the bacterial ribosomal protein bL35 family.</text>
</comment>
<gene>
    <name evidence="1" type="primary">rpmI</name>
    <name type="ordered locus">SUB0712</name>
</gene>
<dbReference type="EMBL" id="AM946015">
    <property type="protein sequence ID" value="CAR41625.1"/>
    <property type="molecule type" value="Genomic_DNA"/>
</dbReference>
<dbReference type="RefSeq" id="WP_012658229.1">
    <property type="nucleotide sequence ID" value="NC_012004.1"/>
</dbReference>
<dbReference type="SMR" id="B9DU41"/>
<dbReference type="STRING" id="218495.SUB0712"/>
<dbReference type="GeneID" id="93825996"/>
<dbReference type="KEGG" id="sub:SUB0712"/>
<dbReference type="eggNOG" id="COG0291">
    <property type="taxonomic scope" value="Bacteria"/>
</dbReference>
<dbReference type="HOGENOM" id="CLU_169643_3_0_9"/>
<dbReference type="OrthoDB" id="47476at2"/>
<dbReference type="Proteomes" id="UP000000449">
    <property type="component" value="Chromosome"/>
</dbReference>
<dbReference type="GO" id="GO:0022625">
    <property type="term" value="C:cytosolic large ribosomal subunit"/>
    <property type="evidence" value="ECO:0007669"/>
    <property type="project" value="TreeGrafter"/>
</dbReference>
<dbReference type="GO" id="GO:0003735">
    <property type="term" value="F:structural constituent of ribosome"/>
    <property type="evidence" value="ECO:0007669"/>
    <property type="project" value="InterPro"/>
</dbReference>
<dbReference type="GO" id="GO:0006412">
    <property type="term" value="P:translation"/>
    <property type="evidence" value="ECO:0007669"/>
    <property type="project" value="UniProtKB-UniRule"/>
</dbReference>
<dbReference type="FunFam" id="4.10.410.60:FF:000001">
    <property type="entry name" value="50S ribosomal protein L35"/>
    <property type="match status" value="1"/>
</dbReference>
<dbReference type="Gene3D" id="4.10.410.60">
    <property type="match status" value="1"/>
</dbReference>
<dbReference type="HAMAP" id="MF_00514">
    <property type="entry name" value="Ribosomal_bL35"/>
    <property type="match status" value="1"/>
</dbReference>
<dbReference type="InterPro" id="IPR001706">
    <property type="entry name" value="Ribosomal_bL35"/>
</dbReference>
<dbReference type="InterPro" id="IPR021137">
    <property type="entry name" value="Ribosomal_bL35-like"/>
</dbReference>
<dbReference type="InterPro" id="IPR018265">
    <property type="entry name" value="Ribosomal_bL35_CS"/>
</dbReference>
<dbReference type="InterPro" id="IPR037229">
    <property type="entry name" value="Ribosomal_bL35_sf"/>
</dbReference>
<dbReference type="NCBIfam" id="TIGR00001">
    <property type="entry name" value="rpmI_bact"/>
    <property type="match status" value="1"/>
</dbReference>
<dbReference type="PANTHER" id="PTHR33343">
    <property type="entry name" value="54S RIBOSOMAL PROTEIN BL35M"/>
    <property type="match status" value="1"/>
</dbReference>
<dbReference type="PANTHER" id="PTHR33343:SF1">
    <property type="entry name" value="LARGE RIBOSOMAL SUBUNIT PROTEIN BL35M"/>
    <property type="match status" value="1"/>
</dbReference>
<dbReference type="Pfam" id="PF01632">
    <property type="entry name" value="Ribosomal_L35p"/>
    <property type="match status" value="1"/>
</dbReference>
<dbReference type="PRINTS" id="PR00064">
    <property type="entry name" value="RIBOSOMALL35"/>
</dbReference>
<dbReference type="SUPFAM" id="SSF143034">
    <property type="entry name" value="L35p-like"/>
    <property type="match status" value="1"/>
</dbReference>
<dbReference type="PROSITE" id="PS00936">
    <property type="entry name" value="RIBOSOMAL_L35"/>
    <property type="match status" value="1"/>
</dbReference>
<proteinExistence type="inferred from homology"/>
<accession>B9DU41</accession>
<evidence type="ECO:0000255" key="1">
    <source>
        <dbReference type="HAMAP-Rule" id="MF_00514"/>
    </source>
</evidence>
<evidence type="ECO:0000256" key="2">
    <source>
        <dbReference type="SAM" id="MobiDB-lite"/>
    </source>
</evidence>
<evidence type="ECO:0000305" key="3"/>
<sequence>MPKQKTHRASAKRFKRTGSGGLKRFRAFTSHRFHGKTKKQRRHLRKASMVSSGDFKRIKAMLTGLK</sequence>